<evidence type="ECO:0000255" key="1">
    <source>
        <dbReference type="HAMAP-Rule" id="MF_02004"/>
    </source>
</evidence>
<name>SYV_BRUSU</name>
<feature type="chain" id="PRO_0000224451" description="Valine--tRNA ligase">
    <location>
        <begin position="1"/>
        <end position="910"/>
    </location>
</feature>
<feature type="coiled-coil region" evidence="1">
    <location>
        <begin position="842"/>
        <end position="910"/>
    </location>
</feature>
<feature type="short sequence motif" description="'HIGH' region">
    <location>
        <begin position="45"/>
        <end position="55"/>
    </location>
</feature>
<feature type="short sequence motif" description="'KMSKS' region">
    <location>
        <begin position="554"/>
        <end position="558"/>
    </location>
</feature>
<feature type="binding site" evidence="1">
    <location>
        <position position="557"/>
    </location>
    <ligand>
        <name>ATP</name>
        <dbReference type="ChEBI" id="CHEBI:30616"/>
    </ligand>
</feature>
<organism>
    <name type="scientific">Brucella suis biovar 1 (strain 1330)</name>
    <dbReference type="NCBI Taxonomy" id="204722"/>
    <lineage>
        <taxon>Bacteria</taxon>
        <taxon>Pseudomonadati</taxon>
        <taxon>Pseudomonadota</taxon>
        <taxon>Alphaproteobacteria</taxon>
        <taxon>Hyphomicrobiales</taxon>
        <taxon>Brucellaceae</taxon>
        <taxon>Brucella/Ochrobactrum group</taxon>
        <taxon>Brucella</taxon>
    </lineage>
</organism>
<dbReference type="EC" id="6.1.1.9" evidence="1"/>
<dbReference type="EMBL" id="AE014291">
    <property type="protein sequence ID" value="AAN29874.1"/>
    <property type="molecule type" value="Genomic_DNA"/>
</dbReference>
<dbReference type="EMBL" id="CP002997">
    <property type="protein sequence ID" value="AEM18291.1"/>
    <property type="molecule type" value="Genomic_DNA"/>
</dbReference>
<dbReference type="RefSeq" id="WP_004690806.1">
    <property type="nucleotide sequence ID" value="NZ_KN046804.1"/>
</dbReference>
<dbReference type="SMR" id="Q8G0Y3"/>
<dbReference type="GeneID" id="45052004"/>
<dbReference type="KEGG" id="bms:BR0948"/>
<dbReference type="KEGG" id="bsi:BS1330_I0944"/>
<dbReference type="PATRIC" id="fig|204722.22.peg.857"/>
<dbReference type="HOGENOM" id="CLU_001493_0_2_5"/>
<dbReference type="PhylomeDB" id="Q8G0Y3"/>
<dbReference type="Proteomes" id="UP000007104">
    <property type="component" value="Chromosome I"/>
</dbReference>
<dbReference type="GO" id="GO:0005829">
    <property type="term" value="C:cytosol"/>
    <property type="evidence" value="ECO:0007669"/>
    <property type="project" value="TreeGrafter"/>
</dbReference>
<dbReference type="GO" id="GO:0002161">
    <property type="term" value="F:aminoacyl-tRNA deacylase activity"/>
    <property type="evidence" value="ECO:0007669"/>
    <property type="project" value="InterPro"/>
</dbReference>
<dbReference type="GO" id="GO:0005524">
    <property type="term" value="F:ATP binding"/>
    <property type="evidence" value="ECO:0007669"/>
    <property type="project" value="UniProtKB-UniRule"/>
</dbReference>
<dbReference type="GO" id="GO:0004832">
    <property type="term" value="F:valine-tRNA ligase activity"/>
    <property type="evidence" value="ECO:0007669"/>
    <property type="project" value="UniProtKB-UniRule"/>
</dbReference>
<dbReference type="GO" id="GO:0006438">
    <property type="term" value="P:valyl-tRNA aminoacylation"/>
    <property type="evidence" value="ECO:0007669"/>
    <property type="project" value="UniProtKB-UniRule"/>
</dbReference>
<dbReference type="CDD" id="cd07962">
    <property type="entry name" value="Anticodon_Ia_Val"/>
    <property type="match status" value="1"/>
</dbReference>
<dbReference type="CDD" id="cd00817">
    <property type="entry name" value="ValRS_core"/>
    <property type="match status" value="1"/>
</dbReference>
<dbReference type="FunFam" id="1.10.287.380:FF:000001">
    <property type="entry name" value="Valine--tRNA ligase"/>
    <property type="match status" value="1"/>
</dbReference>
<dbReference type="FunFam" id="3.40.50.620:FF:000032">
    <property type="entry name" value="Valine--tRNA ligase"/>
    <property type="match status" value="1"/>
</dbReference>
<dbReference type="FunFam" id="3.40.50.620:FF:000078">
    <property type="entry name" value="Valine--tRNA ligase, mitochondrial"/>
    <property type="match status" value="1"/>
</dbReference>
<dbReference type="Gene3D" id="3.40.50.620">
    <property type="entry name" value="HUPs"/>
    <property type="match status" value="2"/>
</dbReference>
<dbReference type="Gene3D" id="1.10.730.10">
    <property type="entry name" value="Isoleucyl-tRNA Synthetase, Domain 1"/>
    <property type="match status" value="1"/>
</dbReference>
<dbReference type="Gene3D" id="1.10.287.380">
    <property type="entry name" value="Valyl-tRNA synthetase, C-terminal domain"/>
    <property type="match status" value="1"/>
</dbReference>
<dbReference type="Gene3D" id="3.90.740.10">
    <property type="entry name" value="Valyl/Leucyl/Isoleucyl-tRNA synthetase, editing domain"/>
    <property type="match status" value="1"/>
</dbReference>
<dbReference type="HAMAP" id="MF_02004">
    <property type="entry name" value="Val_tRNA_synth_type1"/>
    <property type="match status" value="1"/>
</dbReference>
<dbReference type="InterPro" id="IPR001412">
    <property type="entry name" value="aa-tRNA-synth_I_CS"/>
</dbReference>
<dbReference type="InterPro" id="IPR002300">
    <property type="entry name" value="aa-tRNA-synth_Ia"/>
</dbReference>
<dbReference type="InterPro" id="IPR033705">
    <property type="entry name" value="Anticodon_Ia_Val"/>
</dbReference>
<dbReference type="InterPro" id="IPR013155">
    <property type="entry name" value="M/V/L/I-tRNA-synth_anticd-bd"/>
</dbReference>
<dbReference type="InterPro" id="IPR014729">
    <property type="entry name" value="Rossmann-like_a/b/a_fold"/>
</dbReference>
<dbReference type="InterPro" id="IPR010978">
    <property type="entry name" value="tRNA-bd_arm"/>
</dbReference>
<dbReference type="InterPro" id="IPR009080">
    <property type="entry name" value="tRNAsynth_Ia_anticodon-bd"/>
</dbReference>
<dbReference type="InterPro" id="IPR037118">
    <property type="entry name" value="Val-tRNA_synth_C_sf"/>
</dbReference>
<dbReference type="InterPro" id="IPR019499">
    <property type="entry name" value="Val-tRNA_synth_tRNA-bd"/>
</dbReference>
<dbReference type="InterPro" id="IPR009008">
    <property type="entry name" value="Val/Leu/Ile-tRNA-synth_edit"/>
</dbReference>
<dbReference type="InterPro" id="IPR002303">
    <property type="entry name" value="Valyl-tRNA_ligase"/>
</dbReference>
<dbReference type="NCBIfam" id="NF004349">
    <property type="entry name" value="PRK05729.1"/>
    <property type="match status" value="1"/>
</dbReference>
<dbReference type="NCBIfam" id="TIGR00422">
    <property type="entry name" value="valS"/>
    <property type="match status" value="1"/>
</dbReference>
<dbReference type="PANTHER" id="PTHR11946:SF93">
    <property type="entry name" value="VALINE--TRNA LIGASE, CHLOROPLASTIC_MITOCHONDRIAL 2"/>
    <property type="match status" value="1"/>
</dbReference>
<dbReference type="PANTHER" id="PTHR11946">
    <property type="entry name" value="VALYL-TRNA SYNTHETASES"/>
    <property type="match status" value="1"/>
</dbReference>
<dbReference type="Pfam" id="PF08264">
    <property type="entry name" value="Anticodon_1"/>
    <property type="match status" value="1"/>
</dbReference>
<dbReference type="Pfam" id="PF00133">
    <property type="entry name" value="tRNA-synt_1"/>
    <property type="match status" value="1"/>
</dbReference>
<dbReference type="Pfam" id="PF10458">
    <property type="entry name" value="Val_tRNA-synt_C"/>
    <property type="match status" value="1"/>
</dbReference>
<dbReference type="PRINTS" id="PR00986">
    <property type="entry name" value="TRNASYNTHVAL"/>
</dbReference>
<dbReference type="SUPFAM" id="SSF47323">
    <property type="entry name" value="Anticodon-binding domain of a subclass of class I aminoacyl-tRNA synthetases"/>
    <property type="match status" value="1"/>
</dbReference>
<dbReference type="SUPFAM" id="SSF52374">
    <property type="entry name" value="Nucleotidylyl transferase"/>
    <property type="match status" value="1"/>
</dbReference>
<dbReference type="SUPFAM" id="SSF46589">
    <property type="entry name" value="tRNA-binding arm"/>
    <property type="match status" value="1"/>
</dbReference>
<dbReference type="SUPFAM" id="SSF50677">
    <property type="entry name" value="ValRS/IleRS/LeuRS editing domain"/>
    <property type="match status" value="1"/>
</dbReference>
<dbReference type="PROSITE" id="PS00178">
    <property type="entry name" value="AA_TRNA_LIGASE_I"/>
    <property type="match status" value="1"/>
</dbReference>
<reference key="1">
    <citation type="journal article" date="2002" name="Proc. Natl. Acad. Sci. U.S.A.">
        <title>The Brucella suis genome reveals fundamental similarities between animal and plant pathogens and symbionts.</title>
        <authorList>
            <person name="Paulsen I.T."/>
            <person name="Seshadri R."/>
            <person name="Nelson K.E."/>
            <person name="Eisen J.A."/>
            <person name="Heidelberg J.F."/>
            <person name="Read T.D."/>
            <person name="Dodson R.J."/>
            <person name="Umayam L.A."/>
            <person name="Brinkac L.M."/>
            <person name="Beanan M.J."/>
            <person name="Daugherty S.C."/>
            <person name="DeBoy R.T."/>
            <person name="Durkin A.S."/>
            <person name="Kolonay J.F."/>
            <person name="Madupu R."/>
            <person name="Nelson W.C."/>
            <person name="Ayodeji B."/>
            <person name="Kraul M."/>
            <person name="Shetty J."/>
            <person name="Malek J.A."/>
            <person name="Van Aken S.E."/>
            <person name="Riedmuller S."/>
            <person name="Tettelin H."/>
            <person name="Gill S.R."/>
            <person name="White O."/>
            <person name="Salzberg S.L."/>
            <person name="Hoover D.L."/>
            <person name="Lindler L.E."/>
            <person name="Halling S.M."/>
            <person name="Boyle S.M."/>
            <person name="Fraser C.M."/>
        </authorList>
    </citation>
    <scope>NUCLEOTIDE SEQUENCE [LARGE SCALE GENOMIC DNA]</scope>
    <source>
        <strain>1330</strain>
    </source>
</reference>
<reference key="2">
    <citation type="journal article" date="2011" name="J. Bacteriol.">
        <title>Revised genome sequence of Brucella suis 1330.</title>
        <authorList>
            <person name="Tae H."/>
            <person name="Shallom S."/>
            <person name="Settlage R."/>
            <person name="Preston D."/>
            <person name="Adams L.G."/>
            <person name="Garner H.R."/>
        </authorList>
    </citation>
    <scope>NUCLEOTIDE SEQUENCE [LARGE SCALE GENOMIC DNA]</scope>
    <source>
        <strain>1330</strain>
    </source>
</reference>
<proteinExistence type="inferred from homology"/>
<accession>Q8G0Y3</accession>
<accession>G0K9M5</accession>
<protein>
    <recommendedName>
        <fullName evidence="1">Valine--tRNA ligase</fullName>
        <ecNumber evidence="1">6.1.1.9</ecNumber>
    </recommendedName>
    <alternativeName>
        <fullName evidence="1">Valyl-tRNA synthetase</fullName>
        <shortName evidence="1">ValRS</shortName>
    </alternativeName>
</protein>
<sequence length="910" mass="102587">MLEKTYDAAATEPKIAERWEEAGAFKAGAGAKPGADPFAVVIPPPNVTGSLHMGHALNNTIQDIMVRFERMRGKNVLWQPGIDHAGIATQMVVERQLAERKEPNRHAMGREKFIERIWQWKAESGGMISNQLRRLGASCDWSRERFTMDEGLSRAVLEVFVTLYKQGLIYRDKRLVNWDPKLLTAISDIEVESREIKGHLWHFRYPLENVPFDPENPHTYIIVATTRPETMLGDTGVAVNPKDERYHALVGNDVILPLVGRHIPIVADDYADPEAGSGAVKITPAHDFNDFEVGKRNNLRAINILTPEAAITLKDNVDFLEDLELTAELKALIVELDGMDRFAARKRIVELMDERGYLEKIDDHTHAVPHGDRGGVPIEPYLTDQWYVNAGELAKPAMAAVRDGRTQIVPKNWEKTYFDWMENIQPWCVSRQLWWGHQIPAWYGPDGHCFVEKSEAEAKAAARAHYGEDVALERDTDVLDTWFSSALWPFSTLGWPDKTPELATYYPTSVLVTGFDILFFWVARMMMMGLHFMEEIPFHTVYLHALVRDKHGAKMSKSKGNVIDPLELMDEYGADALRFTLAIMAAQGRDVKLDPARIAGYRNFGTKLWNATRFAQMNGVKLAPDFRPENAKLAVNRWILTELTRATRAVTEGIATYRFNEAAGAAYRFVWNQFCDWYLEFLKPIFMGDDEAAKAEAQATAAYCLDQVYKLLHPFMPFMTEELWSLTASEGKKRDTVLALAEWPELSFEDEDAAADINWLVDLVTGIRSVRAEMNVPAGAIAPVVVLDANKVTVDRFARHDAAIKRLARVERISFEQQAPKGAAQMLLGEATICIPLGSLIDLQAEAARLAKEAGKIAAEMDRIEKKLANEKFVANAREEVVEAERERLVELKEAAQRVATAESRIRDAS</sequence>
<comment type="function">
    <text evidence="1">Catalyzes the attachment of valine to tRNA(Val). As ValRS can inadvertently accommodate and process structurally similar amino acids such as threonine, to avoid such errors, it has a 'posttransfer' editing activity that hydrolyzes mischarged Thr-tRNA(Val) in a tRNA-dependent manner.</text>
</comment>
<comment type="catalytic activity">
    <reaction evidence="1">
        <text>tRNA(Val) + L-valine + ATP = L-valyl-tRNA(Val) + AMP + diphosphate</text>
        <dbReference type="Rhea" id="RHEA:10704"/>
        <dbReference type="Rhea" id="RHEA-COMP:9672"/>
        <dbReference type="Rhea" id="RHEA-COMP:9708"/>
        <dbReference type="ChEBI" id="CHEBI:30616"/>
        <dbReference type="ChEBI" id="CHEBI:33019"/>
        <dbReference type="ChEBI" id="CHEBI:57762"/>
        <dbReference type="ChEBI" id="CHEBI:78442"/>
        <dbReference type="ChEBI" id="CHEBI:78537"/>
        <dbReference type="ChEBI" id="CHEBI:456215"/>
        <dbReference type="EC" id="6.1.1.9"/>
    </reaction>
</comment>
<comment type="subunit">
    <text evidence="1">Monomer.</text>
</comment>
<comment type="subcellular location">
    <subcellularLocation>
        <location evidence="1">Cytoplasm</location>
    </subcellularLocation>
</comment>
<comment type="domain">
    <text evidence="1">ValRS has two distinct active sites: one for aminoacylation and one for editing. The misactivated threonine is translocated from the active site to the editing site.</text>
</comment>
<comment type="domain">
    <text evidence="1">The C-terminal coiled-coil domain is crucial for aminoacylation activity.</text>
</comment>
<comment type="similarity">
    <text evidence="1">Belongs to the class-I aminoacyl-tRNA synthetase family. ValS type 1 subfamily.</text>
</comment>
<keyword id="KW-0030">Aminoacyl-tRNA synthetase</keyword>
<keyword id="KW-0067">ATP-binding</keyword>
<keyword id="KW-0175">Coiled coil</keyword>
<keyword id="KW-0963">Cytoplasm</keyword>
<keyword id="KW-0436">Ligase</keyword>
<keyword id="KW-0547">Nucleotide-binding</keyword>
<keyword id="KW-0648">Protein biosynthesis</keyword>
<gene>
    <name evidence="1" type="primary">valS</name>
    <name type="ordered locus">BR0948</name>
    <name type="ordered locus">BS1330_I0944</name>
</gene>